<keyword id="KW-0413">Isomerase</keyword>
<keyword id="KW-0663">Pyridoxal phosphate</keyword>
<name>ALR_SHEB8</name>
<reference key="1">
    <citation type="submission" date="2007-07" db="EMBL/GenBank/DDBJ databases">
        <title>Complete sequence of chromosome of Shewanella baltica OS185.</title>
        <authorList>
            <consortium name="US DOE Joint Genome Institute"/>
            <person name="Copeland A."/>
            <person name="Lucas S."/>
            <person name="Lapidus A."/>
            <person name="Barry K."/>
            <person name="Glavina del Rio T."/>
            <person name="Dalin E."/>
            <person name="Tice H."/>
            <person name="Pitluck S."/>
            <person name="Sims D."/>
            <person name="Brettin T."/>
            <person name="Bruce D."/>
            <person name="Detter J.C."/>
            <person name="Han C."/>
            <person name="Schmutz J."/>
            <person name="Larimer F."/>
            <person name="Land M."/>
            <person name="Hauser L."/>
            <person name="Kyrpides N."/>
            <person name="Mikhailova N."/>
            <person name="Brettar I."/>
            <person name="Rodrigues J."/>
            <person name="Konstantinidis K."/>
            <person name="Tiedje J."/>
            <person name="Richardson P."/>
        </authorList>
    </citation>
    <scope>NUCLEOTIDE SEQUENCE [LARGE SCALE GENOMIC DNA]</scope>
    <source>
        <strain>OS185</strain>
    </source>
</reference>
<comment type="function">
    <text evidence="1">Catalyzes the interconversion of L-alanine and D-alanine. May also act on other amino acids.</text>
</comment>
<comment type="catalytic activity">
    <reaction evidence="1">
        <text>L-alanine = D-alanine</text>
        <dbReference type="Rhea" id="RHEA:20249"/>
        <dbReference type="ChEBI" id="CHEBI:57416"/>
        <dbReference type="ChEBI" id="CHEBI:57972"/>
        <dbReference type="EC" id="5.1.1.1"/>
    </reaction>
</comment>
<comment type="cofactor">
    <cofactor evidence="1">
        <name>pyridoxal 5'-phosphate</name>
        <dbReference type="ChEBI" id="CHEBI:597326"/>
    </cofactor>
</comment>
<comment type="pathway">
    <text evidence="1">Amino-acid biosynthesis; D-alanine biosynthesis; D-alanine from L-alanine: step 1/1.</text>
</comment>
<comment type="similarity">
    <text evidence="1">Belongs to the alanine racemase family.</text>
</comment>
<proteinExistence type="inferred from homology"/>
<protein>
    <recommendedName>
        <fullName evidence="1">Alanine racemase</fullName>
        <ecNumber evidence="1">5.1.1.1</ecNumber>
    </recommendedName>
</protein>
<feature type="chain" id="PRO_1000164611" description="Alanine racemase">
    <location>
        <begin position="1"/>
        <end position="358"/>
    </location>
</feature>
<feature type="active site" description="Proton acceptor; specific for D-alanine" evidence="1">
    <location>
        <position position="35"/>
    </location>
</feature>
<feature type="active site" description="Proton acceptor; specific for L-alanine" evidence="1">
    <location>
        <position position="255"/>
    </location>
</feature>
<feature type="binding site" evidence="1">
    <location>
        <position position="130"/>
    </location>
    <ligand>
        <name>substrate</name>
    </ligand>
</feature>
<feature type="binding site" evidence="1">
    <location>
        <position position="303"/>
    </location>
    <ligand>
        <name>substrate</name>
    </ligand>
</feature>
<feature type="modified residue" description="N6-(pyridoxal phosphate)lysine" evidence="1">
    <location>
        <position position="35"/>
    </location>
</feature>
<accession>A6WJ85</accession>
<dbReference type="EC" id="5.1.1.1" evidence="1"/>
<dbReference type="EMBL" id="CP000753">
    <property type="protein sequence ID" value="ABS06874.1"/>
    <property type="molecule type" value="Genomic_DNA"/>
</dbReference>
<dbReference type="RefSeq" id="WP_012088247.1">
    <property type="nucleotide sequence ID" value="NC_009665.1"/>
</dbReference>
<dbReference type="SMR" id="A6WJ85"/>
<dbReference type="KEGG" id="sbm:Shew185_0717"/>
<dbReference type="HOGENOM" id="CLU_028393_1_0_6"/>
<dbReference type="UniPathway" id="UPA00042">
    <property type="reaction ID" value="UER00497"/>
</dbReference>
<dbReference type="GO" id="GO:0005829">
    <property type="term" value="C:cytosol"/>
    <property type="evidence" value="ECO:0007669"/>
    <property type="project" value="TreeGrafter"/>
</dbReference>
<dbReference type="GO" id="GO:0008784">
    <property type="term" value="F:alanine racemase activity"/>
    <property type="evidence" value="ECO:0007669"/>
    <property type="project" value="UniProtKB-UniRule"/>
</dbReference>
<dbReference type="GO" id="GO:0030170">
    <property type="term" value="F:pyridoxal phosphate binding"/>
    <property type="evidence" value="ECO:0007669"/>
    <property type="project" value="UniProtKB-UniRule"/>
</dbReference>
<dbReference type="GO" id="GO:0030632">
    <property type="term" value="P:D-alanine biosynthetic process"/>
    <property type="evidence" value="ECO:0007669"/>
    <property type="project" value="UniProtKB-UniRule"/>
</dbReference>
<dbReference type="CDD" id="cd06827">
    <property type="entry name" value="PLPDE_III_AR_proteobact"/>
    <property type="match status" value="1"/>
</dbReference>
<dbReference type="FunFam" id="2.40.37.10:FF:000002">
    <property type="entry name" value="Alanine racemase"/>
    <property type="match status" value="1"/>
</dbReference>
<dbReference type="FunFam" id="3.20.20.10:FF:000002">
    <property type="entry name" value="Alanine racemase"/>
    <property type="match status" value="1"/>
</dbReference>
<dbReference type="Gene3D" id="3.20.20.10">
    <property type="entry name" value="Alanine racemase"/>
    <property type="match status" value="1"/>
</dbReference>
<dbReference type="Gene3D" id="2.40.37.10">
    <property type="entry name" value="Lyase, Ornithine Decarboxylase, Chain A, domain 1"/>
    <property type="match status" value="1"/>
</dbReference>
<dbReference type="HAMAP" id="MF_01201">
    <property type="entry name" value="Ala_racemase"/>
    <property type="match status" value="1"/>
</dbReference>
<dbReference type="InterPro" id="IPR000821">
    <property type="entry name" value="Ala_racemase"/>
</dbReference>
<dbReference type="InterPro" id="IPR009006">
    <property type="entry name" value="Ala_racemase/Decarboxylase_C"/>
</dbReference>
<dbReference type="InterPro" id="IPR011079">
    <property type="entry name" value="Ala_racemase_C"/>
</dbReference>
<dbReference type="InterPro" id="IPR001608">
    <property type="entry name" value="Ala_racemase_N"/>
</dbReference>
<dbReference type="InterPro" id="IPR020622">
    <property type="entry name" value="Ala_racemase_pyridoxalP-BS"/>
</dbReference>
<dbReference type="InterPro" id="IPR029066">
    <property type="entry name" value="PLP-binding_barrel"/>
</dbReference>
<dbReference type="NCBIfam" id="TIGR00492">
    <property type="entry name" value="alr"/>
    <property type="match status" value="1"/>
</dbReference>
<dbReference type="PANTHER" id="PTHR30511">
    <property type="entry name" value="ALANINE RACEMASE"/>
    <property type="match status" value="1"/>
</dbReference>
<dbReference type="PANTHER" id="PTHR30511:SF4">
    <property type="entry name" value="ALANINE RACEMASE, BIOSYNTHETIC"/>
    <property type="match status" value="1"/>
</dbReference>
<dbReference type="Pfam" id="PF00842">
    <property type="entry name" value="Ala_racemase_C"/>
    <property type="match status" value="1"/>
</dbReference>
<dbReference type="Pfam" id="PF01168">
    <property type="entry name" value="Ala_racemase_N"/>
    <property type="match status" value="1"/>
</dbReference>
<dbReference type="PRINTS" id="PR00992">
    <property type="entry name" value="ALARACEMASE"/>
</dbReference>
<dbReference type="SMART" id="SM01005">
    <property type="entry name" value="Ala_racemase_C"/>
    <property type="match status" value="1"/>
</dbReference>
<dbReference type="SUPFAM" id="SSF50621">
    <property type="entry name" value="Alanine racemase C-terminal domain-like"/>
    <property type="match status" value="1"/>
</dbReference>
<dbReference type="SUPFAM" id="SSF51419">
    <property type="entry name" value="PLP-binding barrel"/>
    <property type="match status" value="1"/>
</dbReference>
<dbReference type="PROSITE" id="PS00395">
    <property type="entry name" value="ALANINE_RACEMASE"/>
    <property type="match status" value="1"/>
</dbReference>
<organism>
    <name type="scientific">Shewanella baltica (strain OS185)</name>
    <dbReference type="NCBI Taxonomy" id="402882"/>
    <lineage>
        <taxon>Bacteria</taxon>
        <taxon>Pseudomonadati</taxon>
        <taxon>Pseudomonadota</taxon>
        <taxon>Gammaproteobacteria</taxon>
        <taxon>Alteromonadales</taxon>
        <taxon>Shewanellaceae</taxon>
        <taxon>Shewanella</taxon>
    </lineage>
</organism>
<gene>
    <name type="primary">alr</name>
    <name type="ordered locus">Shew185_0717</name>
</gene>
<evidence type="ECO:0000255" key="1">
    <source>
        <dbReference type="HAMAP-Rule" id="MF_01201"/>
    </source>
</evidence>
<sequence length="358" mass="38352">MNPFPRAEISSSALQTNLAALRQQAPASRVMAVVKANGYGHGLLNVANCLVSADGFGLARLDEALELRAGGVTARLLLLEGFFRATDLPLLVGHDIDTVVHHSSQLEMLEQTVLSKPVTVWLKVDSGMHRLGFTPEQFSTVYARLMACPNVAKPIHLMTHFACADEPDNSYTSVQMAAFNSLTAGLPGFRTLANSAGALYWPQSQGDWIRPGIALYGVSPVTGDCGANHGLVPAMELVSQLIAVRDHKANQPVGYGCFWTAKQDTRLGVVAIGYGDGYPRNAPEGTPVWVNGRRVPIVGRVSMDMLTVDLGQDAQDKVGDSALLWGKALPVEEVAEHIGTIAYELVTKLTPRVAVCLA</sequence>